<accession>P9WH76</accession>
<accession>L0T6W6</accession>
<accession>O53767</accession>
<accession>Q8VKI9</accession>
<keyword id="KW-0067">ATP-binding</keyword>
<keyword id="KW-0846">Cobalamin</keyword>
<keyword id="KW-0170">Cobalt</keyword>
<keyword id="KW-0215">Deoxyribonucleotide synthesis</keyword>
<keyword id="KW-1015">Disulfide bond</keyword>
<keyword id="KW-0237">DNA synthesis</keyword>
<keyword id="KW-0547">Nucleotide-binding</keyword>
<keyword id="KW-0560">Oxidoreductase</keyword>
<keyword id="KW-1185">Reference proteome</keyword>
<gene>
    <name type="primary">nrdZ</name>
    <name type="ordered locus">MT0596</name>
</gene>
<reference key="1">
    <citation type="journal article" date="2002" name="J. Bacteriol.">
        <title>Whole-genome comparison of Mycobacterium tuberculosis clinical and laboratory strains.</title>
        <authorList>
            <person name="Fleischmann R.D."/>
            <person name="Alland D."/>
            <person name="Eisen J.A."/>
            <person name="Carpenter L."/>
            <person name="White O."/>
            <person name="Peterson J.D."/>
            <person name="DeBoy R.T."/>
            <person name="Dodson R.J."/>
            <person name="Gwinn M.L."/>
            <person name="Haft D.H."/>
            <person name="Hickey E.K."/>
            <person name="Kolonay J.F."/>
            <person name="Nelson W.C."/>
            <person name="Umayam L.A."/>
            <person name="Ermolaeva M.D."/>
            <person name="Salzberg S.L."/>
            <person name="Delcher A."/>
            <person name="Utterback T.R."/>
            <person name="Weidman J.F."/>
            <person name="Khouri H.M."/>
            <person name="Gill J."/>
            <person name="Mikula A."/>
            <person name="Bishai W."/>
            <person name="Jacobs W.R. Jr."/>
            <person name="Venter J.C."/>
            <person name="Fraser C.M."/>
        </authorList>
    </citation>
    <scope>NUCLEOTIDE SEQUENCE [LARGE SCALE GENOMIC DNA]</scope>
    <source>
        <strain>CDC 1551 / Oshkosh</strain>
    </source>
</reference>
<reference key="2">
    <citation type="journal article" date="2003" name="J. Exp. Med.">
        <title>Inhibition of respiration by nitric oxide induces a Mycobacterium tuberculosis dormancy program.</title>
        <authorList>
            <person name="Voskuil M.I."/>
            <person name="Schnappinger D."/>
            <person name="Visconti K.C."/>
            <person name="Harrell M.I."/>
            <person name="Dolganov G.M."/>
            <person name="Sherman D.R."/>
            <person name="Schoolnik G.K."/>
        </authorList>
    </citation>
    <scope>INDUCTION BY NITRIC OXIDE (NO) AND BY HYPOXIA</scope>
    <scope>DORMANCY REGULON</scope>
    <source>
        <strain>CDC 1551 / Oshkosh</strain>
    </source>
</reference>
<proteinExistence type="evidence at transcript level"/>
<comment type="function">
    <text evidence="1">Provides the precursors necessary for DNA synthesis. Catalyzes the biosynthesis of deoxyribonucleotides from the corresponding ribonucleotides (By similarity).</text>
</comment>
<comment type="catalytic activity">
    <reaction>
        <text>a 2'-deoxyribonucleoside 5'-diphosphate + [thioredoxin]-disulfide + H2O = a ribonucleoside 5'-diphosphate + [thioredoxin]-dithiol</text>
        <dbReference type="Rhea" id="RHEA:23252"/>
        <dbReference type="Rhea" id="RHEA-COMP:10698"/>
        <dbReference type="Rhea" id="RHEA-COMP:10700"/>
        <dbReference type="ChEBI" id="CHEBI:15377"/>
        <dbReference type="ChEBI" id="CHEBI:29950"/>
        <dbReference type="ChEBI" id="CHEBI:50058"/>
        <dbReference type="ChEBI" id="CHEBI:57930"/>
        <dbReference type="ChEBI" id="CHEBI:73316"/>
        <dbReference type="EC" id="1.17.4.1"/>
    </reaction>
</comment>
<comment type="cofactor">
    <cofactor evidence="1">
        <name>adenosylcob(III)alamin</name>
        <dbReference type="ChEBI" id="CHEBI:18408"/>
    </cofactor>
    <text evidence="1">5'-deoxyadenosylcobalamine (coenzyme B12).</text>
</comment>
<comment type="induction">
    <text evidence="3">A member of the dormancy regulon. Induced in response to reduced oxygen tension (hypoxia) and low levels of nitric oxide (NO).</text>
</comment>
<comment type="similarity">
    <text evidence="4">Belongs to the ribonucleoside diphosphate reductase class-2 family.</text>
</comment>
<comment type="sequence caution" evidence="4">
    <conflict type="erroneous initiation">
        <sequence resource="EMBL-CDS" id="AAK44819"/>
    </conflict>
    <text>Extended N-terminus.</text>
</comment>
<evidence type="ECO:0000250" key="1"/>
<evidence type="ECO:0000255" key="2">
    <source>
        <dbReference type="PROSITE-ProRule" id="PRU00492"/>
    </source>
</evidence>
<evidence type="ECO:0000269" key="3">
    <source>
    </source>
</evidence>
<evidence type="ECO:0000305" key="4"/>
<name>NRDZ_MYCTO</name>
<sequence length="692" mass="74445">MGVSWPAKVRRRDGTLVPFDIARIEAAVTRAAREVACDDPDMPGTVAKAVADALGRGIAPVEDIQDCVEARLGEAGLDDVARVYIIYRQRRAELRTAKALLGVRDELKLSLAAVTVLRERYLLHDEQGRPAESTGELMDRSARCVAAAEDQYEPGSSRRWAERFATLLRNLEFLPNSPTLMNSGTDLGLLAGCFVLPIEDSLQSIFATLGQAAELQRAGGGTGYAFSHLRPAGDRVASTGGTASGPVSFLRLYDSAAGVVSMGGRRRGACMAVLDVSHPDICDFVTAKAESPSELPHFNLSVGVTDAFLRAVERNGLHRLVNPRTGKIVARMPAAELFDAICKAAHAGGDPGLVFLDTINRANPVPGRGRIEATNPCGEVPLLPYESCNLGSINLARMLADGRVDWDRLEEVAGVAVRFLDDVIDVSRYPFPELGEAARATRKIGLGVMGLAELLAALGIPYDSEEAVRLATRLMRRIQQAAHTASRRLAEERGAFPAFTDSRFARSGPRRNAQVTSVAPTGTISLIAGTTAGIEPMFAIAFTRAIVGRHLLEVNPCFDRLARDRGFYRDELIAEIAQRGGVRGYPRLPAEVRAAFPTAAEIAPQWHLRMQAAVQRHVEAAVSKTVNLPATATVDDVRAIYVAAWKAKVKGITVYRYGSREGQVLSSAAPKPLLAQADTEFSGGCAGRSCEF</sequence>
<organism>
    <name type="scientific">Mycobacterium tuberculosis (strain CDC 1551 / Oshkosh)</name>
    <dbReference type="NCBI Taxonomy" id="83331"/>
    <lineage>
        <taxon>Bacteria</taxon>
        <taxon>Bacillati</taxon>
        <taxon>Actinomycetota</taxon>
        <taxon>Actinomycetes</taxon>
        <taxon>Mycobacteriales</taxon>
        <taxon>Mycobacteriaceae</taxon>
        <taxon>Mycobacterium</taxon>
        <taxon>Mycobacterium tuberculosis complex</taxon>
    </lineage>
</organism>
<dbReference type="EC" id="1.17.4.1"/>
<dbReference type="EMBL" id="AE000516">
    <property type="protein sequence ID" value="AAK44819.1"/>
    <property type="status" value="ALT_INIT"/>
    <property type="molecule type" value="Genomic_DNA"/>
</dbReference>
<dbReference type="PIR" id="A70933">
    <property type="entry name" value="A70933"/>
</dbReference>
<dbReference type="RefSeq" id="WP_078440980.1">
    <property type="nucleotide sequence ID" value="NC_002755.2"/>
</dbReference>
<dbReference type="SMR" id="P9WH76"/>
<dbReference type="KEGG" id="mtc:MT0596"/>
<dbReference type="HOGENOM" id="CLU_000404_2_3_11"/>
<dbReference type="Proteomes" id="UP000001020">
    <property type="component" value="Chromosome"/>
</dbReference>
<dbReference type="GO" id="GO:0005524">
    <property type="term" value="F:ATP binding"/>
    <property type="evidence" value="ECO:0007669"/>
    <property type="project" value="UniProtKB-KW"/>
</dbReference>
<dbReference type="GO" id="GO:0031419">
    <property type="term" value="F:cobalamin binding"/>
    <property type="evidence" value="ECO:0007669"/>
    <property type="project" value="UniProtKB-KW"/>
</dbReference>
<dbReference type="GO" id="GO:0004748">
    <property type="term" value="F:ribonucleoside-diphosphate reductase activity, thioredoxin disulfide as acceptor"/>
    <property type="evidence" value="ECO:0007669"/>
    <property type="project" value="UniProtKB-EC"/>
</dbReference>
<dbReference type="GO" id="GO:0009263">
    <property type="term" value="P:deoxyribonucleotide biosynthetic process"/>
    <property type="evidence" value="ECO:0007669"/>
    <property type="project" value="UniProtKB-KW"/>
</dbReference>
<dbReference type="GO" id="GO:0071897">
    <property type="term" value="P:DNA biosynthetic process"/>
    <property type="evidence" value="ECO:0007669"/>
    <property type="project" value="UniProtKB-KW"/>
</dbReference>
<dbReference type="CDD" id="cd02888">
    <property type="entry name" value="RNR_II_dimer"/>
    <property type="match status" value="1"/>
</dbReference>
<dbReference type="FunFam" id="3.20.70.20:FF:000018">
    <property type="entry name" value="Vitamin B12-dependent ribonucleotide reductase"/>
    <property type="match status" value="1"/>
</dbReference>
<dbReference type="Gene3D" id="3.20.70.20">
    <property type="match status" value="1"/>
</dbReference>
<dbReference type="InterPro" id="IPR005144">
    <property type="entry name" value="ATP-cone_dom"/>
</dbReference>
<dbReference type="InterPro" id="IPR050862">
    <property type="entry name" value="RdRp_reductase_class-2"/>
</dbReference>
<dbReference type="InterPro" id="IPR000788">
    <property type="entry name" value="RNR_lg_C"/>
</dbReference>
<dbReference type="InterPro" id="IPR013509">
    <property type="entry name" value="RNR_lsu_N"/>
</dbReference>
<dbReference type="InterPro" id="IPR013344">
    <property type="entry name" value="RNR_NrdJ/NrdZ"/>
</dbReference>
<dbReference type="InterPro" id="IPR008926">
    <property type="entry name" value="RNR_R1-su_N"/>
</dbReference>
<dbReference type="NCBIfam" id="TIGR02504">
    <property type="entry name" value="NrdJ_Z"/>
    <property type="match status" value="1"/>
</dbReference>
<dbReference type="PANTHER" id="PTHR43371:SF1">
    <property type="entry name" value="RIBONUCLEOSIDE-DIPHOSPHATE REDUCTASE"/>
    <property type="match status" value="1"/>
</dbReference>
<dbReference type="PANTHER" id="PTHR43371">
    <property type="entry name" value="VITAMIN B12-DEPENDENT RIBONUCLEOTIDE REDUCTASE"/>
    <property type="match status" value="1"/>
</dbReference>
<dbReference type="Pfam" id="PF03477">
    <property type="entry name" value="ATP-cone"/>
    <property type="match status" value="1"/>
</dbReference>
<dbReference type="Pfam" id="PF02867">
    <property type="entry name" value="Ribonuc_red_lgC"/>
    <property type="match status" value="2"/>
</dbReference>
<dbReference type="Pfam" id="PF00317">
    <property type="entry name" value="Ribonuc_red_lgN"/>
    <property type="match status" value="1"/>
</dbReference>
<dbReference type="PRINTS" id="PR01183">
    <property type="entry name" value="RIBORDTASEM1"/>
</dbReference>
<dbReference type="SUPFAM" id="SSF51998">
    <property type="entry name" value="PFL-like glycyl radical enzymes"/>
    <property type="match status" value="1"/>
</dbReference>
<dbReference type="SUPFAM" id="SSF48168">
    <property type="entry name" value="R1 subunit of ribonucleotide reductase, N-terminal domain"/>
    <property type="match status" value="1"/>
</dbReference>
<dbReference type="PROSITE" id="PS51161">
    <property type="entry name" value="ATP_CONE"/>
    <property type="match status" value="1"/>
</dbReference>
<feature type="chain" id="PRO_0000428235" description="Vitamin B12-dependent ribonucleoside-diphosphate reductase">
    <location>
        <begin position="1"/>
        <end position="692"/>
    </location>
</feature>
<feature type="domain" description="ATP-cone" evidence="2">
    <location>
        <begin position="7"/>
        <end position="95"/>
    </location>
</feature>
<feature type="active site" description="Proton acceptor" evidence="1">
    <location>
        <position position="375"/>
    </location>
</feature>
<feature type="active site" description="Cysteine radical intermediate" evidence="1">
    <location>
        <position position="377"/>
    </location>
</feature>
<feature type="active site" description="Proton acceptor" evidence="1">
    <location>
        <position position="379"/>
    </location>
</feature>
<feature type="binding site" evidence="1">
    <location>
        <position position="177"/>
    </location>
    <ligand>
        <name>substrate</name>
    </ligand>
</feature>
<feature type="binding site" evidence="1">
    <location>
        <begin position="192"/>
        <end position="193"/>
    </location>
    <ligand>
        <name>substrate</name>
    </ligand>
</feature>
<feature type="binding site" evidence="1">
    <location>
        <position position="221"/>
    </location>
    <ligand>
        <name>substrate</name>
    </ligand>
</feature>
<feature type="binding site" evidence="1">
    <location>
        <begin position="375"/>
        <end position="379"/>
    </location>
    <ligand>
        <name>substrate</name>
    </ligand>
</feature>
<feature type="binding site" evidence="1">
    <location>
        <begin position="520"/>
        <end position="524"/>
    </location>
    <ligand>
        <name>substrate</name>
    </ligand>
</feature>
<feature type="disulfide bond" description="Redox-active" evidence="1">
    <location>
        <begin position="193"/>
        <end position="388"/>
    </location>
</feature>
<protein>
    <recommendedName>
        <fullName>Vitamin B12-dependent ribonucleoside-diphosphate reductase</fullName>
        <shortName>B12-dependent RNR</shortName>
        <ecNumber>1.17.4.1</ecNumber>
    </recommendedName>
    <alternativeName>
        <fullName>Ribonucleotide reductase</fullName>
    </alternativeName>
</protein>